<sequence>MTSEQFEYHLTGKEILEKEFKTGLRGYSPEDVDEFLDMVIKDYSTFTQEIEALQAENIRLVQELDNAPLRTSTQPAPTFQAAAQPAGTTNFDILKRLSNLEKHVFGNKLDDNE</sequence>
<comment type="function">
    <text evidence="1">Divisome component that associates with the complex late in its assembly, after the Z-ring is formed, and is dependent on DivIC and PBP2B for its recruitment to the divisome. Together with EzrA, is a key component of the system that regulates PBP1 localization during cell cycle progression. Its main role could be the removal of PBP1 from the cell pole after pole maturation is completed. Also contributes to the recruitment of PBP1 to the division complex. Not essential for septum formation.</text>
</comment>
<comment type="subunit">
    <text evidence="1">Forms polymers through the coiled coil domains. Interacts with PBP1, MreC and EzrA.</text>
</comment>
<comment type="subcellular location">
    <subcellularLocation>
        <location evidence="1">Cytoplasm</location>
    </subcellularLocation>
    <text evidence="1">Shuttles between the lateral wall and the division site in a cell cycle-dependent manner.</text>
</comment>
<comment type="disruption phenotype">
    <text evidence="2">Cells lacking this gene have increased lysozyme resistance, which is important for escape from the host innate immune response. The lysozyme resistance is OatA-independent, but is dependent on PgdA, and an increased N-deacetylation of the peptidoglycan is observed in these cells. The phenotype is suppressed by the concomitant deletion of gpsB and pbpA1.</text>
</comment>
<comment type="similarity">
    <text evidence="1">Belongs to the GpsB family.</text>
</comment>
<keyword id="KW-0002">3D-structure</keyword>
<keyword id="KW-0131">Cell cycle</keyword>
<keyword id="KW-0132">Cell division</keyword>
<keyword id="KW-0133">Cell shape</keyword>
<keyword id="KW-0175">Coiled coil</keyword>
<keyword id="KW-0963">Cytoplasm</keyword>
<keyword id="KW-1185">Reference proteome</keyword>
<organism>
    <name type="scientific">Listeria monocytogenes serovar 1/2a (strain ATCC BAA-679 / EGD-e)</name>
    <dbReference type="NCBI Taxonomy" id="169963"/>
    <lineage>
        <taxon>Bacteria</taxon>
        <taxon>Bacillati</taxon>
        <taxon>Bacillota</taxon>
        <taxon>Bacilli</taxon>
        <taxon>Bacillales</taxon>
        <taxon>Listeriaceae</taxon>
        <taxon>Listeria</taxon>
    </lineage>
</organism>
<reference key="1">
    <citation type="journal article" date="2001" name="Science">
        <title>Comparative genomics of Listeria species.</title>
        <authorList>
            <person name="Glaser P."/>
            <person name="Frangeul L."/>
            <person name="Buchrieser C."/>
            <person name="Rusniok C."/>
            <person name="Amend A."/>
            <person name="Baquero F."/>
            <person name="Berche P."/>
            <person name="Bloecker H."/>
            <person name="Brandt P."/>
            <person name="Chakraborty T."/>
            <person name="Charbit A."/>
            <person name="Chetouani F."/>
            <person name="Couve E."/>
            <person name="de Daruvar A."/>
            <person name="Dehoux P."/>
            <person name="Domann E."/>
            <person name="Dominguez-Bernal G."/>
            <person name="Duchaud E."/>
            <person name="Durant L."/>
            <person name="Dussurget O."/>
            <person name="Entian K.-D."/>
            <person name="Fsihi H."/>
            <person name="Garcia-del Portillo F."/>
            <person name="Garrido P."/>
            <person name="Gautier L."/>
            <person name="Goebel W."/>
            <person name="Gomez-Lopez N."/>
            <person name="Hain T."/>
            <person name="Hauf J."/>
            <person name="Jackson D."/>
            <person name="Jones L.-M."/>
            <person name="Kaerst U."/>
            <person name="Kreft J."/>
            <person name="Kuhn M."/>
            <person name="Kunst F."/>
            <person name="Kurapkat G."/>
            <person name="Madueno E."/>
            <person name="Maitournam A."/>
            <person name="Mata Vicente J."/>
            <person name="Ng E."/>
            <person name="Nedjari H."/>
            <person name="Nordsiek G."/>
            <person name="Novella S."/>
            <person name="de Pablos B."/>
            <person name="Perez-Diaz J.-C."/>
            <person name="Purcell R."/>
            <person name="Remmel B."/>
            <person name="Rose M."/>
            <person name="Schlueter T."/>
            <person name="Simoes N."/>
            <person name="Tierrez A."/>
            <person name="Vazquez-Boland J.-A."/>
            <person name="Voss H."/>
            <person name="Wehland J."/>
            <person name="Cossart P."/>
        </authorList>
    </citation>
    <scope>NUCLEOTIDE SEQUENCE [LARGE SCALE GENOMIC DNA]</scope>
    <source>
        <strain>ATCC BAA-679 / EGD-e</strain>
    </source>
</reference>
<reference key="2">
    <citation type="journal article" date="2018" name="Mol. Microbiol.">
        <title>Stimulation of PgdA-dependent peptidoglycan N-deacetylation by GpsB-PBP A1 in Listeria monocytogenes.</title>
        <authorList>
            <person name="Rismondo J."/>
            <person name="Wamp S."/>
            <person name="Aldridge C."/>
            <person name="Vollmer W."/>
            <person name="Halbedel S."/>
        </authorList>
    </citation>
    <scope>DISRUPTION PHENOTYPE</scope>
    <source>
        <strain evidence="3">ATCC BAA-679 / EGD-e</strain>
    </source>
</reference>
<protein>
    <recommendedName>
        <fullName evidence="1">Cell cycle protein GpsB</fullName>
    </recommendedName>
    <alternativeName>
        <fullName evidence="1">Guiding PBP1-shuttling protein</fullName>
    </alternativeName>
</protein>
<proteinExistence type="evidence at protein level"/>
<dbReference type="EMBL" id="AL591981">
    <property type="protein sequence ID" value="CAC99966.1"/>
    <property type="molecule type" value="Genomic_DNA"/>
</dbReference>
<dbReference type="PIR" id="AH1310">
    <property type="entry name" value="AH1310"/>
</dbReference>
<dbReference type="RefSeq" id="NP_465412.1">
    <property type="nucleotide sequence ID" value="NC_003210.1"/>
</dbReference>
<dbReference type="RefSeq" id="WP_003722998.1">
    <property type="nucleotide sequence ID" value="NZ_CP149495.1"/>
</dbReference>
<dbReference type="PDB" id="4UG1">
    <property type="method" value="X-ray"/>
    <property type="resolution" value="1.60 A"/>
    <property type="chains" value="A/B=1-73"/>
</dbReference>
<dbReference type="PDBsum" id="4UG1"/>
<dbReference type="SMR" id="Q8Y614"/>
<dbReference type="STRING" id="169963.gene:17594573"/>
<dbReference type="PaxDb" id="169963-lmo1888"/>
<dbReference type="EnsemblBacteria" id="CAC99966">
    <property type="protein sequence ID" value="CAC99966"/>
    <property type="gene ID" value="CAC99966"/>
</dbReference>
<dbReference type="GeneID" id="985801"/>
<dbReference type="KEGG" id="lmo:lmo1888"/>
<dbReference type="PATRIC" id="fig|169963.11.peg.1934"/>
<dbReference type="eggNOG" id="COG3599">
    <property type="taxonomic scope" value="Bacteria"/>
</dbReference>
<dbReference type="HOGENOM" id="CLU_140309_1_0_9"/>
<dbReference type="OrthoDB" id="389699at2"/>
<dbReference type="PhylomeDB" id="Q8Y614"/>
<dbReference type="BioCyc" id="LMON169963:LMO1888-MONOMER"/>
<dbReference type="EvolutionaryTrace" id="Q8Y614"/>
<dbReference type="PHI-base" id="PHI:5373"/>
<dbReference type="Proteomes" id="UP000000817">
    <property type="component" value="Chromosome"/>
</dbReference>
<dbReference type="GO" id="GO:0005737">
    <property type="term" value="C:cytoplasm"/>
    <property type="evidence" value="ECO:0007669"/>
    <property type="project" value="UniProtKB-SubCell"/>
</dbReference>
<dbReference type="GO" id="GO:0051301">
    <property type="term" value="P:cell division"/>
    <property type="evidence" value="ECO:0007669"/>
    <property type="project" value="UniProtKB-UniRule"/>
</dbReference>
<dbReference type="GO" id="GO:0009273">
    <property type="term" value="P:peptidoglycan-based cell wall biogenesis"/>
    <property type="evidence" value="ECO:0000318"/>
    <property type="project" value="GO_Central"/>
</dbReference>
<dbReference type="GO" id="GO:0008360">
    <property type="term" value="P:regulation of cell shape"/>
    <property type="evidence" value="ECO:0007669"/>
    <property type="project" value="UniProtKB-UniRule"/>
</dbReference>
<dbReference type="Gene3D" id="6.10.250.660">
    <property type="match status" value="1"/>
</dbReference>
<dbReference type="HAMAP" id="MF_02011">
    <property type="entry name" value="GpsB"/>
    <property type="match status" value="1"/>
</dbReference>
<dbReference type="InterPro" id="IPR011229">
    <property type="entry name" value="Cell_cycle_GpsB"/>
</dbReference>
<dbReference type="InterPro" id="IPR019933">
    <property type="entry name" value="DivIVA_domain"/>
</dbReference>
<dbReference type="InterPro" id="IPR007793">
    <property type="entry name" value="DivIVA_fam"/>
</dbReference>
<dbReference type="NCBIfam" id="TIGR03544">
    <property type="entry name" value="DivI1A_domain"/>
    <property type="match status" value="1"/>
</dbReference>
<dbReference type="NCBIfam" id="NF010725">
    <property type="entry name" value="PRK14127.1"/>
    <property type="match status" value="1"/>
</dbReference>
<dbReference type="PANTHER" id="PTHR35794:SF1">
    <property type="entry name" value="CELL CYCLE PROTEIN GPSB"/>
    <property type="match status" value="1"/>
</dbReference>
<dbReference type="PANTHER" id="PTHR35794">
    <property type="entry name" value="CELL DIVISION PROTEIN DIVIVA"/>
    <property type="match status" value="1"/>
</dbReference>
<dbReference type="Pfam" id="PF05103">
    <property type="entry name" value="DivIVA"/>
    <property type="match status" value="1"/>
</dbReference>
<dbReference type="PIRSF" id="PIRSF029938">
    <property type="entry name" value="UCP029938"/>
    <property type="match status" value="1"/>
</dbReference>
<accession>Q8Y614</accession>
<gene>
    <name evidence="1" type="primary">gpsB</name>
    <name type="ordered locus">lmo1888</name>
</gene>
<name>GPSB_LISMO</name>
<evidence type="ECO:0000255" key="1">
    <source>
        <dbReference type="HAMAP-Rule" id="MF_02011"/>
    </source>
</evidence>
<evidence type="ECO:0000269" key="2">
    <source>
    </source>
</evidence>
<evidence type="ECO:0000303" key="3">
    <source>
    </source>
</evidence>
<evidence type="ECO:0007829" key="4">
    <source>
        <dbReference type="PDB" id="4UG1"/>
    </source>
</evidence>
<feature type="chain" id="PRO_0000337926" description="Cell cycle protein GpsB">
    <location>
        <begin position="1"/>
        <end position="113"/>
    </location>
</feature>
<feature type="coiled-coil region" evidence="1">
    <location>
        <begin position="36"/>
        <end position="68"/>
    </location>
</feature>
<feature type="helix" evidence="4">
    <location>
        <begin position="12"/>
        <end position="17"/>
    </location>
</feature>
<feature type="strand" evidence="4">
    <location>
        <begin position="24"/>
        <end position="27"/>
    </location>
</feature>
<feature type="helix" evidence="4">
    <location>
        <begin position="29"/>
        <end position="64"/>
    </location>
</feature>